<reference key="1">
    <citation type="journal article" date="2012" name="PLoS ONE">
        <title>The success of Acinetobacter species; genetic, metabolic and virulence attributes.</title>
        <authorList>
            <person name="Peleg A.Y."/>
            <person name="de Breij A."/>
            <person name="Adams M.D."/>
            <person name="Cerqueira G.M."/>
            <person name="Mocali S."/>
            <person name="Galardini M."/>
            <person name="Nibbering P.H."/>
            <person name="Earl A.M."/>
            <person name="Ward D.V."/>
            <person name="Paterson D.L."/>
            <person name="Seifert H."/>
            <person name="Dijkshoorn L."/>
        </authorList>
    </citation>
    <scope>NUCLEOTIDE SEQUENCE [LARGE SCALE GENOMIC DNA]</scope>
    <source>
        <strain>ATCC 19606 / DSM 30007 / JCM 6841 / CCUG 19606 / CIP 70.34 / NBRC 109757 / NCIMB 12457 / NCTC 12156 / 81</strain>
    </source>
</reference>
<reference key="2">
    <citation type="journal article" date="2015" name="J. Bacteriol.">
        <title>Characterization of an Acinetobacter baumannii lptD deletion strain: permeability defects and response to inhibition of lipopolysaccharide and fatty acid biosynthesis.</title>
        <authorList>
            <person name="Bojkovic J."/>
            <person name="Richie D.L."/>
            <person name="Six D.A."/>
            <person name="Rath C.M."/>
            <person name="Sawyer W.S."/>
            <person name="Hu Q."/>
            <person name="Dean C.R."/>
        </authorList>
    </citation>
    <scope>DISRUPTION PHENOTYPE</scope>
    <source>
        <strain>ATCC 19606 / DSM 30007 / JCM 6841 / CCUG 19606 / CIP 70.34 / NBRC 109757 / NCIMB 12457 / NCTC 12156 / 81</strain>
    </source>
</reference>
<protein>
    <recommendedName>
        <fullName evidence="1">LPS-assembly protein LptD</fullName>
    </recommendedName>
</protein>
<keyword id="KW-0998">Cell outer membrane</keyword>
<keyword id="KW-0472">Membrane</keyword>
<keyword id="KW-1185">Reference proteome</keyword>
<keyword id="KW-0732">Signal</keyword>
<proteinExistence type="inferred from homology"/>
<gene>
    <name evidence="1 3" type="primary">lptD</name>
    <name evidence="4" type="ORF">HMPREF0010_00811</name>
</gene>
<evidence type="ECO:0000255" key="1">
    <source>
        <dbReference type="HAMAP-Rule" id="MF_01411"/>
    </source>
</evidence>
<evidence type="ECO:0000269" key="2">
    <source>
    </source>
</evidence>
<evidence type="ECO:0000303" key="3">
    <source>
    </source>
</evidence>
<evidence type="ECO:0000312" key="4">
    <source>
        <dbReference type="EMBL" id="EEX05046.1"/>
    </source>
</evidence>
<comment type="function">
    <text evidence="1">Together with LptE, is involved in the assembly of lipopolysaccharide (LPS) at the surface of the outer membrane.</text>
</comment>
<comment type="subunit">
    <text evidence="1">Component of the lipopolysaccharide transport and assembly complex. Interacts with LptE and LptA.</text>
</comment>
<comment type="subcellular location">
    <subcellularLocation>
        <location evidence="1">Cell outer membrane</location>
    </subcellularLocation>
</comment>
<comment type="disruption phenotype">
    <text evidence="2">Non-essential under typical in vitro growth conditions. Loss of lptD causes impaired in vitro growth. Decreases LPS levels and susceptibility to polymyxin B, increases outer membrane permeability and hypersensitivity to hydrophobic antibiotics. Causes an accumulation of lipid IV(A). Deletion impairs cell envelope integrity more than the loss of LPS biosynthesis, presumably due to the accumulation of toxic intermediates.</text>
</comment>
<comment type="similarity">
    <text evidence="1">Belongs to the LptD family.</text>
</comment>
<accession>D0C7T1</accession>
<sequence>MVNETMKHQFKFNPLATAIFTLLCSGSIQSSYAESAGVVSNIDNNQLKASIKEAYPGQEFFQQYYVDKSAPEAQLRNNKYLSSAFCQGTWITPINPETKALDADKATSVVTADYGHYNPAGDSVLEGNVVIDQEGRTVRADKVTIDKTQTFAHAQGRVQLAQGGLLSQSDEIDYNLKTQTGNLDNSFYISEQQHAHGHAGKIERTSPNVMVLNDATYTTCPPGQKPGWKIQANKIELNQETGRGVTRGTKLYVKDVPVLAVPYFNFPIDDRRTTGILNPQFGFSNDGGIELSVPVYLNLAPNYDATITPRYLADRGAMLQGEFRYLTDGFGAGQIWGGILPSDKEYDDKDRKDFHFLHNWDINDQWSTNLEYNYASDKDYFSDLDSSPISKTDLNLRRAWELNYQHGIPGLKAQLKVEDFQTLDPEVKDVNKPYARLPQFLLNYVTGNPLGLQYEFNNDTAYFKKSINDDSAQESSGTRIYNQFATRYNYRTPAAFVIPELSVRSIQTFYDKDSIASQGLDGGSENKSVVVPQFTLDTGLNFEREGKYLQTLTPRAFYAYAPYKNQDGYPNFDSTTASISYDQLFNPYRFYGHDRLEDNNFLSLGVSYSLFDTVGLERLRASVGQSYYFEDRRVTLKQQDEIDTERNTGPVVSLSSQLNQNFTIAANSAWMSNGDNAQRDFQLYYTGDKGNLYNLGYFYRKDIPGRQDTYDQVVASFIQPIKDNWRIMGHVQYDMDNDVARELLLGVNYESCCWGISVYGRSYYNDLDDPKSPDVSEKRAIMAEITLKGLGGLNNKLASLLENRVLGFNKINQSWTQR</sequence>
<feature type="signal peptide" evidence="1">
    <location>
        <begin position="1"/>
        <end position="33"/>
    </location>
</feature>
<feature type="chain" id="PRO_0000439170" description="LPS-assembly protein LptD" evidence="1">
    <location>
        <begin position="34"/>
        <end position="818"/>
    </location>
</feature>
<dbReference type="EMBL" id="GG704572">
    <property type="protein sequence ID" value="EEX05046.1"/>
    <property type="molecule type" value="Genomic_DNA"/>
</dbReference>
<dbReference type="SMR" id="D0C7T1"/>
<dbReference type="Proteomes" id="UP000005740">
    <property type="component" value="Unassembled WGS sequence"/>
</dbReference>
<dbReference type="GO" id="GO:0009279">
    <property type="term" value="C:cell outer membrane"/>
    <property type="evidence" value="ECO:0007669"/>
    <property type="project" value="UniProtKB-SubCell"/>
</dbReference>
<dbReference type="GO" id="GO:1990351">
    <property type="term" value="C:transporter complex"/>
    <property type="evidence" value="ECO:0007669"/>
    <property type="project" value="TreeGrafter"/>
</dbReference>
<dbReference type="GO" id="GO:0043165">
    <property type="term" value="P:Gram-negative-bacterium-type cell outer membrane assembly"/>
    <property type="evidence" value="ECO:0007669"/>
    <property type="project" value="UniProtKB-UniRule"/>
</dbReference>
<dbReference type="GO" id="GO:0015920">
    <property type="term" value="P:lipopolysaccharide transport"/>
    <property type="evidence" value="ECO:0007669"/>
    <property type="project" value="InterPro"/>
</dbReference>
<dbReference type="Gene3D" id="2.60.450.10">
    <property type="entry name" value="Lipopolysaccharide (LPS) transport protein A like domain"/>
    <property type="match status" value="1"/>
</dbReference>
<dbReference type="HAMAP" id="MF_01411">
    <property type="entry name" value="LPS_assembly_LptD"/>
    <property type="match status" value="1"/>
</dbReference>
<dbReference type="InterPro" id="IPR020889">
    <property type="entry name" value="LipoPS_assembly_LptD"/>
</dbReference>
<dbReference type="InterPro" id="IPR050218">
    <property type="entry name" value="LptD"/>
</dbReference>
<dbReference type="InterPro" id="IPR007543">
    <property type="entry name" value="LptD_C"/>
</dbReference>
<dbReference type="InterPro" id="IPR005653">
    <property type="entry name" value="OstA-like_N"/>
</dbReference>
<dbReference type="PANTHER" id="PTHR30189">
    <property type="entry name" value="LPS-ASSEMBLY PROTEIN"/>
    <property type="match status" value="1"/>
</dbReference>
<dbReference type="PANTHER" id="PTHR30189:SF1">
    <property type="entry name" value="LPS-ASSEMBLY PROTEIN LPTD"/>
    <property type="match status" value="1"/>
</dbReference>
<dbReference type="Pfam" id="PF04453">
    <property type="entry name" value="LptD"/>
    <property type="match status" value="1"/>
</dbReference>
<dbReference type="Pfam" id="PF03968">
    <property type="entry name" value="LptD_N"/>
    <property type="match status" value="1"/>
</dbReference>
<name>LPTD_ACIB2</name>
<organism>
    <name type="scientific">Acinetobacter baumannii (strain ATCC 19606 / DSM 30007 / JCM 6841 / CCUG 19606 / CIP 70.34 / NBRC 109757 / NCIMB 12457 / NCTC 12156 / 81)</name>
    <dbReference type="NCBI Taxonomy" id="575584"/>
    <lineage>
        <taxon>Bacteria</taxon>
        <taxon>Pseudomonadati</taxon>
        <taxon>Pseudomonadota</taxon>
        <taxon>Gammaproteobacteria</taxon>
        <taxon>Moraxellales</taxon>
        <taxon>Moraxellaceae</taxon>
        <taxon>Acinetobacter</taxon>
        <taxon>Acinetobacter calcoaceticus/baumannii complex</taxon>
    </lineage>
</organism>